<dbReference type="EC" id="2.7.1.67"/>
<dbReference type="EMBL" id="AL590450">
    <property type="protein sequence ID" value="CAD25955.2"/>
    <property type="molecule type" value="Genomic_DNA"/>
</dbReference>
<dbReference type="RefSeq" id="NP_586351.1">
    <property type="nucleotide sequence ID" value="NM_001042184.1"/>
</dbReference>
<dbReference type="SMR" id="Q8SQY7"/>
<dbReference type="STRING" id="284813.Q8SQY7"/>
<dbReference type="GeneID" id="860004"/>
<dbReference type="KEGG" id="ecu:ECU11_0450"/>
<dbReference type="VEuPathDB" id="MicrosporidiaDB:ECU11_0450"/>
<dbReference type="HOGENOM" id="CLU_253125_0_0_1"/>
<dbReference type="InParanoid" id="Q8SQY7"/>
<dbReference type="OrthoDB" id="10264149at2759"/>
<dbReference type="Proteomes" id="UP000000819">
    <property type="component" value="Chromosome XI"/>
</dbReference>
<dbReference type="GO" id="GO:0005737">
    <property type="term" value="C:cytoplasm"/>
    <property type="evidence" value="ECO:0007669"/>
    <property type="project" value="UniProtKB-SubCell"/>
</dbReference>
<dbReference type="GO" id="GO:0005886">
    <property type="term" value="C:plasma membrane"/>
    <property type="evidence" value="ECO:0007669"/>
    <property type="project" value="TreeGrafter"/>
</dbReference>
<dbReference type="GO" id="GO:0004430">
    <property type="term" value="F:1-phosphatidylinositol 4-kinase activity"/>
    <property type="evidence" value="ECO:0007669"/>
    <property type="project" value="UniProtKB-EC"/>
</dbReference>
<dbReference type="GO" id="GO:0005524">
    <property type="term" value="F:ATP binding"/>
    <property type="evidence" value="ECO:0007669"/>
    <property type="project" value="UniProtKB-KW"/>
</dbReference>
<dbReference type="GO" id="GO:0046854">
    <property type="term" value="P:phosphatidylinositol phosphate biosynthetic process"/>
    <property type="evidence" value="ECO:0007669"/>
    <property type="project" value="InterPro"/>
</dbReference>
<dbReference type="GO" id="GO:0048015">
    <property type="term" value="P:phosphatidylinositol-mediated signaling"/>
    <property type="evidence" value="ECO:0007669"/>
    <property type="project" value="TreeGrafter"/>
</dbReference>
<dbReference type="CDD" id="cd05167">
    <property type="entry name" value="PI4Kc_III_alpha"/>
    <property type="match status" value="1"/>
</dbReference>
<dbReference type="FunFam" id="3.30.1010.10:FF:000014">
    <property type="entry name" value="Phosphatidylinositol 4-kinase STT4"/>
    <property type="match status" value="1"/>
</dbReference>
<dbReference type="FunFam" id="1.10.1070.11:FF:000016">
    <property type="entry name" value="PIK1p Phosphatidylinositol 4-kinase"/>
    <property type="match status" value="1"/>
</dbReference>
<dbReference type="Gene3D" id="1.10.1070.11">
    <property type="entry name" value="Phosphatidylinositol 3-/4-kinase, catalytic domain"/>
    <property type="match status" value="1"/>
</dbReference>
<dbReference type="Gene3D" id="3.30.1010.10">
    <property type="entry name" value="Phosphatidylinositol 3-kinase Catalytic Subunit, Chain A, domain 4"/>
    <property type="match status" value="1"/>
</dbReference>
<dbReference type="Gene3D" id="1.25.40.70">
    <property type="entry name" value="Phosphatidylinositol 3-kinase, accessory domain (PIK)"/>
    <property type="match status" value="1"/>
</dbReference>
<dbReference type="InterPro" id="IPR016024">
    <property type="entry name" value="ARM-type_fold"/>
</dbReference>
<dbReference type="InterPro" id="IPR011009">
    <property type="entry name" value="Kinase-like_dom_sf"/>
</dbReference>
<dbReference type="InterPro" id="IPR000403">
    <property type="entry name" value="PI3/4_kinase_cat_dom"/>
</dbReference>
<dbReference type="InterPro" id="IPR036940">
    <property type="entry name" value="PI3/4_kinase_cat_sf"/>
</dbReference>
<dbReference type="InterPro" id="IPR018936">
    <property type="entry name" value="PI3/4_kinase_CS"/>
</dbReference>
<dbReference type="InterPro" id="IPR001263">
    <property type="entry name" value="PI3K_accessory_dom"/>
</dbReference>
<dbReference type="InterPro" id="IPR042236">
    <property type="entry name" value="PI3K_accessory_sf"/>
</dbReference>
<dbReference type="InterPro" id="IPR015433">
    <property type="entry name" value="PI_Kinase"/>
</dbReference>
<dbReference type="PANTHER" id="PTHR10048:SF15">
    <property type="entry name" value="PHOSPHATIDYLINOSITOL 4-KINASE ALPHA"/>
    <property type="match status" value="1"/>
</dbReference>
<dbReference type="PANTHER" id="PTHR10048">
    <property type="entry name" value="PHOSPHATIDYLINOSITOL KINASE"/>
    <property type="match status" value="1"/>
</dbReference>
<dbReference type="Pfam" id="PF00454">
    <property type="entry name" value="PI3_PI4_kinase"/>
    <property type="match status" value="1"/>
</dbReference>
<dbReference type="Pfam" id="PF00613">
    <property type="entry name" value="PI3Ka"/>
    <property type="match status" value="1"/>
</dbReference>
<dbReference type="SMART" id="SM00146">
    <property type="entry name" value="PI3Kc"/>
    <property type="match status" value="1"/>
</dbReference>
<dbReference type="SUPFAM" id="SSF48371">
    <property type="entry name" value="ARM repeat"/>
    <property type="match status" value="1"/>
</dbReference>
<dbReference type="SUPFAM" id="SSF56112">
    <property type="entry name" value="Protein kinase-like (PK-like)"/>
    <property type="match status" value="1"/>
</dbReference>
<dbReference type="PROSITE" id="PS00915">
    <property type="entry name" value="PI3_4_KINASE_1"/>
    <property type="match status" value="1"/>
</dbReference>
<dbReference type="PROSITE" id="PS50290">
    <property type="entry name" value="PI3_4_KINASE_3"/>
    <property type="match status" value="1"/>
</dbReference>
<dbReference type="PROSITE" id="PS51545">
    <property type="entry name" value="PIK_HELICAL"/>
    <property type="match status" value="1"/>
</dbReference>
<accession>Q8SQY7</accession>
<comment type="function">
    <text evidence="1">Acts on phosphatidylinositol (PI) in the first committed step in the production of the second messenger inositol 1,4,5,-trisphosphate.</text>
</comment>
<comment type="catalytic activity">
    <reaction>
        <text>a 1,2-diacyl-sn-glycero-3-phospho-(1D-myo-inositol) + ATP = a 1,2-diacyl-sn-glycero-3-phospho-(1D-myo-inositol 4-phosphate) + ADP + H(+)</text>
        <dbReference type="Rhea" id="RHEA:19877"/>
        <dbReference type="ChEBI" id="CHEBI:15378"/>
        <dbReference type="ChEBI" id="CHEBI:30616"/>
        <dbReference type="ChEBI" id="CHEBI:57880"/>
        <dbReference type="ChEBI" id="CHEBI:58178"/>
        <dbReference type="ChEBI" id="CHEBI:456216"/>
        <dbReference type="EC" id="2.7.1.67"/>
    </reaction>
</comment>
<comment type="subcellular location">
    <subcellularLocation>
        <location evidence="1">Cytoplasm</location>
    </subcellularLocation>
</comment>
<comment type="similarity">
    <text evidence="4">Belongs to the PI3/PI4-kinase family. Type III PI4K subfamily.</text>
</comment>
<evidence type="ECO:0000250" key="1"/>
<evidence type="ECO:0000255" key="2">
    <source>
        <dbReference type="PROSITE-ProRule" id="PRU00269"/>
    </source>
</evidence>
<evidence type="ECO:0000255" key="3">
    <source>
        <dbReference type="PROSITE-ProRule" id="PRU00878"/>
    </source>
</evidence>
<evidence type="ECO:0000305" key="4"/>
<keyword id="KW-0067">ATP-binding</keyword>
<keyword id="KW-0963">Cytoplasm</keyword>
<keyword id="KW-0418">Kinase</keyword>
<keyword id="KW-0547">Nucleotide-binding</keyword>
<keyword id="KW-1185">Reference proteome</keyword>
<keyword id="KW-0808">Transferase</keyword>
<protein>
    <recommendedName>
        <fullName>Probable phosphatidylinositol 4-kinase STT4 homolog</fullName>
        <shortName>PI4-kinase</shortName>
        <shortName>PtdIns-4-kinase</shortName>
        <ecNumber>2.7.1.67</ecNumber>
    </recommendedName>
</protein>
<sequence>MRIEVMIKGNSKEICIPLIKETTLEDIRELSEVEVYDISSGLNAYAILKNSTVCLEYSSKLYEMYIAIFLKMLDDTATSKEIMSDMGGMEPYSLLEVGLINAFIEALIWRVEQGEVVGRYEAFVEDLCRKMSSNLLCEIVSWKQEEDIMNTKFDYLLLSLRLIVMMVEYKTKEEGEIEKKSTFAFAKEYFYKAFALLGETKDLEDDMAFVFRASLTIDALVTRQVAGRISEVFPIVEDLPISKKNMFGIYIQMAEVCMSEDGALNDLLYSVFTTSCLVSLDTGYGNEFVEVLIAMVEQDGGSGGKRIGNVMETFRMIFHSLQDSESRGRERLIWNFLSFLSRIRMGRDMGDLNSIFLKFIVKYPETIELYSNFILINKIDFPLHTLHGISSFGFMKRFYSVLFNKVRKERHDKAHVDKLISEFLKFFLATKNKELIGILPLVPYIPSKREVLYVLYEIYSFLFEKEVIEHVGLFLLKTPALVGISSSIYYNVRYLRHLATRLSLVDVEPRMVVFLGIVYYCESKKLYNFNYTGILEYIQDEDGIRMSRDGLVGVIELIHSGYISRSHEFTLSYVNSLLTIALKPKTIETTLVIIEIILRRILEKEEKIIFMKGIHQRFQELFVLLSSKRFLSDEVSDSYRRLYRSIVERIKCAPNFYNYVVLCLADISFFDGEFPRGHFKSFNDLYNHTLSRMGVVEGFPDIFMVDHGWSCSENTDKAVSGPFLHRVCGSGKEEETKPRETKSHNMYDIIRTGTNDSVMSLESSTGSISLHSSAPMPSISRKAWLEMLDEGIRKREKSVSWLIDVIYTRRSQSSTIRTVLDLLKLRLRNKFEYEDLYILLKAYNILSIRENDSEEFLKHALHRGLDFKTDPAICYKLSMETNGFYRFFFRALHLAVSNLPCNEDLSFPERTQLVSRFDTADLVHIQNTFKQKMVQKLLERSRSPSYRTYFFNVDSLGVIDSLTIIRRLDDPSLVSRAFERLRESKNEMLFYVPQLVQMLRYKKVFEMAFSTLKELAKDEYVAHQLIWNLKANLYVDGRAAVNNYHGTFVRCIEEIMKEMPDGSRDIFLKEEEFISSLTKISSELTPHLRSSKDEKRRRINEYLSRIKLHPGIYIPFYPDLKIIEIVNGSARALQSHSKVPFMASFRVQDPGGQISIKQLIFKSGDDCRQDMLALQIISMFESIFKQANLDIFLYPYKVMATSSGTGIIEVIPNSKSRDQIGKENINNLLEYFEYKFGFKESEGYLTAICNFASSLAGYSLVGYFLNIKDRHNGNIMIDDQGRMIHIDFGYMLEMSPGNLNIEAPLKLTKEIEELLGGTSGKGFEIYQELMVKGFLALRRRSKDLVMMVDSFVDSELPCYRRNAVENFILRFRFELSDKNARRFVLSLIAESSQKFRTWMYDQYQKITNNIAF</sequence>
<gene>
    <name type="primary">STT4</name>
    <name type="ordered locus">ECU11_0450</name>
</gene>
<organism>
    <name type="scientific">Encephalitozoon cuniculi (strain GB-M1)</name>
    <name type="common">Microsporidian parasite</name>
    <dbReference type="NCBI Taxonomy" id="284813"/>
    <lineage>
        <taxon>Eukaryota</taxon>
        <taxon>Fungi</taxon>
        <taxon>Fungi incertae sedis</taxon>
        <taxon>Microsporidia</taxon>
        <taxon>Unikaryonidae</taxon>
        <taxon>Encephalitozoon</taxon>
    </lineage>
</organism>
<feature type="chain" id="PRO_0000385337" description="Probable phosphatidylinositol 4-kinase STT4 homolog">
    <location>
        <begin position="1"/>
        <end position="1412"/>
    </location>
</feature>
<feature type="domain" description="PIK helical" evidence="3">
    <location>
        <begin position="878"/>
        <end position="1055"/>
    </location>
</feature>
<feature type="domain" description="PI3K/PI4K catalytic" evidence="2">
    <location>
        <begin position="1127"/>
        <end position="1396"/>
    </location>
</feature>
<feature type="region of interest" description="Pleckstrin homology (PH) domain conferring phosphoinositide binding specificity" evidence="1">
    <location>
        <begin position="1056"/>
        <end position="1163"/>
    </location>
</feature>
<feature type="region of interest" description="G-loop" evidence="2">
    <location>
        <begin position="1133"/>
        <end position="1139"/>
    </location>
</feature>
<feature type="region of interest" description="Catalytic loop" evidence="2">
    <location>
        <begin position="1266"/>
        <end position="1274"/>
    </location>
</feature>
<feature type="region of interest" description="Activation loop" evidence="2">
    <location>
        <begin position="1285"/>
        <end position="1308"/>
    </location>
</feature>
<reference key="1">
    <citation type="journal article" date="2001" name="Nature">
        <title>Genome sequence and gene compaction of the eukaryote parasite Encephalitozoon cuniculi.</title>
        <authorList>
            <person name="Katinka M.D."/>
            <person name="Duprat S."/>
            <person name="Cornillot E."/>
            <person name="Metenier G."/>
            <person name="Thomarat F."/>
            <person name="Prensier G."/>
            <person name="Barbe V."/>
            <person name="Peyretaillade E."/>
            <person name="Brottier P."/>
            <person name="Wincker P."/>
            <person name="Delbac F."/>
            <person name="El Alaoui H."/>
            <person name="Peyret P."/>
            <person name="Saurin W."/>
            <person name="Gouy M."/>
            <person name="Weissenbach J."/>
            <person name="Vivares C.P."/>
        </authorList>
    </citation>
    <scope>NUCLEOTIDE SEQUENCE [LARGE SCALE GENOMIC DNA]</scope>
    <source>
        <strain>GB-M1</strain>
    </source>
</reference>
<reference key="2">
    <citation type="journal article" date="2009" name="BMC Genomics">
        <title>Identification of transcriptional signals in Encephalitozoon cuniculi widespread among Microsporidia phylum: support for accurate structural genome annotation.</title>
        <authorList>
            <person name="Peyretaillade E."/>
            <person name="Goncalves O."/>
            <person name="Terrat S."/>
            <person name="Dugat-Bony E."/>
            <person name="Wincker P."/>
            <person name="Cornman R.S."/>
            <person name="Evans J.D."/>
            <person name="Delbac F."/>
            <person name="Peyret P."/>
        </authorList>
    </citation>
    <scope>GENOME REANNOTATION</scope>
    <source>
        <strain>GB-M1</strain>
    </source>
</reference>
<reference key="3">
    <citation type="journal article" date="2007" name="BMC Genomics">
        <title>The complement of protein kinases of the microsporidium Encephalitozoon cuniculi in relation to those of Saccharomyces cerevisiae and Schizosaccharomyces pombe.</title>
        <authorList>
            <person name="Miranda-Saavedra D."/>
            <person name="Stark M.J.R."/>
            <person name="Packer J.C."/>
            <person name="Vivares C.P."/>
            <person name="Doerig C."/>
            <person name="Barton G.J."/>
        </authorList>
    </citation>
    <scope>PREDICTION OF FUNCTION</scope>
</reference>
<name>STT4_ENCCU</name>
<proteinExistence type="inferred from homology"/>